<reference key="1">
    <citation type="journal article" date="1999" name="Nature">
        <title>Sequence and analysis of chromosome 4 of the plant Arabidopsis thaliana.</title>
        <authorList>
            <person name="Mayer K.F.X."/>
            <person name="Schueller C."/>
            <person name="Wambutt R."/>
            <person name="Murphy G."/>
            <person name="Volckaert G."/>
            <person name="Pohl T."/>
            <person name="Duesterhoeft A."/>
            <person name="Stiekema W."/>
            <person name="Entian K.-D."/>
            <person name="Terryn N."/>
            <person name="Harris B."/>
            <person name="Ansorge W."/>
            <person name="Brandt P."/>
            <person name="Grivell L.A."/>
            <person name="Rieger M."/>
            <person name="Weichselgartner M."/>
            <person name="de Simone V."/>
            <person name="Obermaier B."/>
            <person name="Mache R."/>
            <person name="Mueller M."/>
            <person name="Kreis M."/>
            <person name="Delseny M."/>
            <person name="Puigdomenech P."/>
            <person name="Watson M."/>
            <person name="Schmidtheini T."/>
            <person name="Reichert B."/>
            <person name="Portetelle D."/>
            <person name="Perez-Alonso M."/>
            <person name="Boutry M."/>
            <person name="Bancroft I."/>
            <person name="Vos P."/>
            <person name="Hoheisel J."/>
            <person name="Zimmermann W."/>
            <person name="Wedler H."/>
            <person name="Ridley P."/>
            <person name="Langham S.-A."/>
            <person name="McCullagh B."/>
            <person name="Bilham L."/>
            <person name="Robben J."/>
            <person name="van der Schueren J."/>
            <person name="Grymonprez B."/>
            <person name="Chuang Y.-J."/>
            <person name="Vandenbussche F."/>
            <person name="Braeken M."/>
            <person name="Weltjens I."/>
            <person name="Voet M."/>
            <person name="Bastiaens I."/>
            <person name="Aert R."/>
            <person name="Defoor E."/>
            <person name="Weitzenegger T."/>
            <person name="Bothe G."/>
            <person name="Ramsperger U."/>
            <person name="Hilbert H."/>
            <person name="Braun M."/>
            <person name="Holzer E."/>
            <person name="Brandt A."/>
            <person name="Peters S."/>
            <person name="van Staveren M."/>
            <person name="Dirkse W."/>
            <person name="Mooijman P."/>
            <person name="Klein Lankhorst R."/>
            <person name="Rose M."/>
            <person name="Hauf J."/>
            <person name="Koetter P."/>
            <person name="Berneiser S."/>
            <person name="Hempel S."/>
            <person name="Feldpausch M."/>
            <person name="Lamberth S."/>
            <person name="Van den Daele H."/>
            <person name="De Keyser A."/>
            <person name="Buysshaert C."/>
            <person name="Gielen J."/>
            <person name="Villarroel R."/>
            <person name="De Clercq R."/>
            <person name="van Montagu M."/>
            <person name="Rogers J."/>
            <person name="Cronin A."/>
            <person name="Quail M.A."/>
            <person name="Bray-Allen S."/>
            <person name="Clark L."/>
            <person name="Doggett J."/>
            <person name="Hall S."/>
            <person name="Kay M."/>
            <person name="Lennard N."/>
            <person name="McLay K."/>
            <person name="Mayes R."/>
            <person name="Pettett A."/>
            <person name="Rajandream M.A."/>
            <person name="Lyne M."/>
            <person name="Benes V."/>
            <person name="Rechmann S."/>
            <person name="Borkova D."/>
            <person name="Bloecker H."/>
            <person name="Scharfe M."/>
            <person name="Grimm M."/>
            <person name="Loehnert T.-H."/>
            <person name="Dose S."/>
            <person name="de Haan M."/>
            <person name="Maarse A.C."/>
            <person name="Schaefer M."/>
            <person name="Mueller-Auer S."/>
            <person name="Gabel C."/>
            <person name="Fuchs M."/>
            <person name="Fartmann B."/>
            <person name="Granderath K."/>
            <person name="Dauner D."/>
            <person name="Herzl A."/>
            <person name="Neumann S."/>
            <person name="Argiriou A."/>
            <person name="Vitale D."/>
            <person name="Liguori R."/>
            <person name="Piravandi E."/>
            <person name="Massenet O."/>
            <person name="Quigley F."/>
            <person name="Clabauld G."/>
            <person name="Muendlein A."/>
            <person name="Felber R."/>
            <person name="Schnabl S."/>
            <person name="Hiller R."/>
            <person name="Schmidt W."/>
            <person name="Lecharny A."/>
            <person name="Aubourg S."/>
            <person name="Chefdor F."/>
            <person name="Cooke R."/>
            <person name="Berger C."/>
            <person name="Monfort A."/>
            <person name="Casacuberta E."/>
            <person name="Gibbons T."/>
            <person name="Weber N."/>
            <person name="Vandenbol M."/>
            <person name="Bargues M."/>
            <person name="Terol J."/>
            <person name="Torres A."/>
            <person name="Perez-Perez A."/>
            <person name="Purnelle B."/>
            <person name="Bent E."/>
            <person name="Johnson S."/>
            <person name="Tacon D."/>
            <person name="Jesse T."/>
            <person name="Heijnen L."/>
            <person name="Schwarz S."/>
            <person name="Scholler P."/>
            <person name="Heber S."/>
            <person name="Francs P."/>
            <person name="Bielke C."/>
            <person name="Frishman D."/>
            <person name="Haase D."/>
            <person name="Lemcke K."/>
            <person name="Mewes H.-W."/>
            <person name="Stocker S."/>
            <person name="Zaccaria P."/>
            <person name="Bevan M."/>
            <person name="Wilson R.K."/>
            <person name="de la Bastide M."/>
            <person name="Habermann K."/>
            <person name="Parnell L."/>
            <person name="Dedhia N."/>
            <person name="Gnoj L."/>
            <person name="Schutz K."/>
            <person name="Huang E."/>
            <person name="Spiegel L."/>
            <person name="Sekhon M."/>
            <person name="Murray J."/>
            <person name="Sheet P."/>
            <person name="Cordes M."/>
            <person name="Abu-Threideh J."/>
            <person name="Stoneking T."/>
            <person name="Kalicki J."/>
            <person name="Graves T."/>
            <person name="Harmon G."/>
            <person name="Edwards J."/>
            <person name="Latreille P."/>
            <person name="Courtney L."/>
            <person name="Cloud J."/>
            <person name="Abbott A."/>
            <person name="Scott K."/>
            <person name="Johnson D."/>
            <person name="Minx P."/>
            <person name="Bentley D."/>
            <person name="Fulton B."/>
            <person name="Miller N."/>
            <person name="Greco T."/>
            <person name="Kemp K."/>
            <person name="Kramer J."/>
            <person name="Fulton L."/>
            <person name="Mardis E."/>
            <person name="Dante M."/>
            <person name="Pepin K."/>
            <person name="Hillier L.W."/>
            <person name="Nelson J."/>
            <person name="Spieth J."/>
            <person name="Ryan E."/>
            <person name="Andrews S."/>
            <person name="Geisel C."/>
            <person name="Layman D."/>
            <person name="Du H."/>
            <person name="Ali J."/>
            <person name="Berghoff A."/>
            <person name="Jones K."/>
            <person name="Drone K."/>
            <person name="Cotton M."/>
            <person name="Joshu C."/>
            <person name="Antonoiu B."/>
            <person name="Zidanic M."/>
            <person name="Strong C."/>
            <person name="Sun H."/>
            <person name="Lamar B."/>
            <person name="Yordan C."/>
            <person name="Ma P."/>
            <person name="Zhong J."/>
            <person name="Preston R."/>
            <person name="Vil D."/>
            <person name="Shekher M."/>
            <person name="Matero A."/>
            <person name="Shah R."/>
            <person name="Swaby I.K."/>
            <person name="O'Shaughnessy A."/>
            <person name="Rodriguez M."/>
            <person name="Hoffman J."/>
            <person name="Till S."/>
            <person name="Granat S."/>
            <person name="Shohdy N."/>
            <person name="Hasegawa A."/>
            <person name="Hameed A."/>
            <person name="Lodhi M."/>
            <person name="Johnson A."/>
            <person name="Chen E."/>
            <person name="Marra M.A."/>
            <person name="Martienssen R."/>
            <person name="McCombie W.R."/>
        </authorList>
    </citation>
    <scope>NUCLEOTIDE SEQUENCE [LARGE SCALE GENOMIC DNA]</scope>
    <source>
        <strain>cv. Columbia</strain>
    </source>
</reference>
<reference key="2">
    <citation type="journal article" date="2017" name="Plant J.">
        <title>Araport11: a complete reannotation of the Arabidopsis thaliana reference genome.</title>
        <authorList>
            <person name="Cheng C.Y."/>
            <person name="Krishnakumar V."/>
            <person name="Chan A.P."/>
            <person name="Thibaud-Nissen F."/>
            <person name="Schobel S."/>
            <person name="Town C.D."/>
        </authorList>
    </citation>
    <scope>GENOME REANNOTATION</scope>
    <source>
        <strain>cv. Columbia</strain>
    </source>
</reference>
<reference key="3">
    <citation type="journal article" date="2003" name="Science">
        <title>Empirical analysis of transcriptional activity in the Arabidopsis genome.</title>
        <authorList>
            <person name="Yamada K."/>
            <person name="Lim J."/>
            <person name="Dale J.M."/>
            <person name="Chen H."/>
            <person name="Shinn P."/>
            <person name="Palm C.J."/>
            <person name="Southwick A.M."/>
            <person name="Wu H.C."/>
            <person name="Kim C.J."/>
            <person name="Nguyen M."/>
            <person name="Pham P.K."/>
            <person name="Cheuk R.F."/>
            <person name="Karlin-Newmann G."/>
            <person name="Liu S.X."/>
            <person name="Lam B."/>
            <person name="Sakano H."/>
            <person name="Wu T."/>
            <person name="Yu G."/>
            <person name="Miranda M."/>
            <person name="Quach H.L."/>
            <person name="Tripp M."/>
            <person name="Chang C.H."/>
            <person name="Lee J.M."/>
            <person name="Toriumi M.J."/>
            <person name="Chan M.M."/>
            <person name="Tang C.C."/>
            <person name="Onodera C.S."/>
            <person name="Deng J.M."/>
            <person name="Akiyama K."/>
            <person name="Ansari Y."/>
            <person name="Arakawa T."/>
            <person name="Banh J."/>
            <person name="Banno F."/>
            <person name="Bowser L."/>
            <person name="Brooks S.Y."/>
            <person name="Carninci P."/>
            <person name="Chao Q."/>
            <person name="Choy N."/>
            <person name="Enju A."/>
            <person name="Goldsmith A.D."/>
            <person name="Gurjal M."/>
            <person name="Hansen N.F."/>
            <person name="Hayashizaki Y."/>
            <person name="Johnson-Hopson C."/>
            <person name="Hsuan V.W."/>
            <person name="Iida K."/>
            <person name="Karnes M."/>
            <person name="Khan S."/>
            <person name="Koesema E."/>
            <person name="Ishida J."/>
            <person name="Jiang P.X."/>
            <person name="Jones T."/>
            <person name="Kawai J."/>
            <person name="Kamiya A."/>
            <person name="Meyers C."/>
            <person name="Nakajima M."/>
            <person name="Narusaka M."/>
            <person name="Seki M."/>
            <person name="Sakurai T."/>
            <person name="Satou M."/>
            <person name="Tamse R."/>
            <person name="Vaysberg M."/>
            <person name="Wallender E.K."/>
            <person name="Wong C."/>
            <person name="Yamamura Y."/>
            <person name="Yuan S."/>
            <person name="Shinozaki K."/>
            <person name="Davis R.W."/>
            <person name="Theologis A."/>
            <person name="Ecker J.R."/>
        </authorList>
    </citation>
    <scope>NUCLEOTIDE SEQUENCE [LARGE SCALE MRNA]</scope>
    <source>
        <strain>cv. Columbia</strain>
    </source>
</reference>
<reference key="4">
    <citation type="journal article" date="2003" name="Plant J.">
        <title>GeBP, the first member of a new gene family in Arabidopsis, encodes a nuclear protein with DNA-binding activity and is regulated by KNAT1.</title>
        <authorList>
            <person name="Curaba J."/>
            <person name="Herzog M."/>
            <person name="Vachon G."/>
        </authorList>
    </citation>
    <scope>FUNCTION</scope>
    <scope>SUBCELLULAR LOCATION</scope>
    <scope>TISSUE SPECIFICITY</scope>
    <scope>DISRUPTION PHENOTYPE</scope>
    <scope>INDUCTION BY KNAT1</scope>
    <scope>LACK OF INDUCTION BY GIBBERELLINS</scope>
    <scope>GENE FAMILY</scope>
</reference>
<reference key="5">
    <citation type="journal article" date="2008" name="Plant Physiol.">
        <title>GeBP and GeBP-like proteins are noncanonical leucine-zipper transcription factors that regulate cytokinin response in Arabidopsis.</title>
        <authorList>
            <person name="Chevalier F."/>
            <person name="Perazza D."/>
            <person name="Laporte F."/>
            <person name="Le Henanff G."/>
            <person name="Hornitschek P."/>
            <person name="Bonneville J.M."/>
            <person name="Herzog M."/>
            <person name="Vachon G."/>
        </authorList>
    </citation>
    <scope>INTERACTION WITH GPL1; GPL2 AND GPL3</scope>
    <scope>SUBUNIT</scope>
    <scope>MUTAGENESIS OF LEU-256; GLY-263; LEU-270; LEU-277; PHE-284 AND PHE-291</scope>
    <scope>SUBCELLULAR LOCATION</scope>
    <scope>TISSUE SPECIFICITY</scope>
</reference>
<reference key="6">
    <citation type="journal article" date="2011" name="Plant Physiol.">
        <title>GeBP/GPL transcription factors regulate a subset of CPR5-dependent processes.</title>
        <authorList>
            <person name="Perazza D."/>
            <person name="Laporte F."/>
            <person name="Balague C."/>
            <person name="Chevalier F."/>
            <person name="Remo S."/>
            <person name="Bourge M."/>
            <person name="Larkin J."/>
            <person name="Herzog M."/>
            <person name="Vachon G."/>
        </authorList>
    </citation>
    <scope>FUNCTION</scope>
</reference>
<reference key="7">
    <citation type="journal article" date="2014" name="Front. Plant Sci.">
        <title>The complex becomes more complex: protein-protein interactions of SnRK1 with DUF581 family proteins provide a framework for cell- and stimulus type-specific SnRK1 signaling in plants.</title>
        <authorList>
            <person name="Nietzsche M."/>
            <person name="Schiessl I."/>
            <person name="Boernke F."/>
        </authorList>
    </citation>
    <scope>INTERACTION WITH KIN10; KIN11 AND FLZ4</scope>
</reference>
<reference key="8">
    <citation type="journal article" date="2018" name="Plant Physiol.">
        <title>STOREKEEPER RELATED1/G-element binding protein (STKR1) interacts with protein kinase SnRK1.</title>
        <authorList>
            <person name="Nietzsche M."/>
            <person name="Guerra T."/>
            <person name="Alseekh S."/>
            <person name="Wiermer M."/>
            <person name="Sonnewald S."/>
            <person name="Fernie A.R."/>
            <person name="Boernke F."/>
        </authorList>
    </citation>
    <scope>INTERACTION WITH KIN10; KIN11; GPL1 AND GPL3</scope>
    <scope>SUBUNIT</scope>
    <scope>PHOSPHORYLATION AT SER-27</scope>
    <scope>MUTAGENESIS OF SER-27</scope>
    <scope>FUNCTION</scope>
</reference>
<evidence type="ECO:0000256" key="1">
    <source>
        <dbReference type="SAM" id="MobiDB-lite"/>
    </source>
</evidence>
<evidence type="ECO:0000269" key="2">
    <source>
    </source>
</evidence>
<evidence type="ECO:0000269" key="3">
    <source>
    </source>
</evidence>
<evidence type="ECO:0000269" key="4">
    <source>
    </source>
</evidence>
<evidence type="ECO:0000269" key="5">
    <source>
    </source>
</evidence>
<evidence type="ECO:0000269" key="6">
    <source>
    </source>
</evidence>
<evidence type="ECO:0000303" key="7">
    <source>
    </source>
</evidence>
<evidence type="ECO:0000303" key="8">
    <source>
    </source>
</evidence>
<evidence type="ECO:0000305" key="9"/>
<evidence type="ECO:0000305" key="10">
    <source>
    </source>
</evidence>
<evidence type="ECO:0000312" key="11">
    <source>
        <dbReference type="Araport" id="AT4G00270"/>
    </source>
</evidence>
<evidence type="ECO:0000312" key="12">
    <source>
        <dbReference type="EMBL" id="AAF02789.1"/>
    </source>
</evidence>
<feature type="chain" id="PRO_0000436989" description="GLABROUS1 enhancer-binding protein">
    <location>
        <begin position="1"/>
        <end position="302"/>
    </location>
</feature>
<feature type="region of interest" description="Disordered" evidence="1">
    <location>
        <begin position="1"/>
        <end position="55"/>
    </location>
</feature>
<feature type="region of interest" description="Disordered" evidence="1">
    <location>
        <begin position="158"/>
        <end position="229"/>
    </location>
</feature>
<feature type="region of interest" description="Non-canonical leucine-zipper" evidence="10">
    <location>
        <begin position="270"/>
        <end position="291"/>
    </location>
</feature>
<feature type="compositionally biased region" description="Basic and acidic residues" evidence="1">
    <location>
        <begin position="180"/>
        <end position="195"/>
    </location>
</feature>
<feature type="compositionally biased region" description="Polar residues" evidence="1">
    <location>
        <begin position="208"/>
        <end position="217"/>
    </location>
</feature>
<feature type="modified residue" description="Phosphoserine" evidence="6">
    <location>
        <position position="27"/>
    </location>
</feature>
<feature type="mutagenesis site" description="Strongly reduced phosphorylation." evidence="6">
    <original>S</original>
    <variation>A</variation>
    <location>
        <position position="27"/>
    </location>
</feature>
<feature type="mutagenesis site" description="No effect on dimerization." evidence="3">
    <original>L</original>
    <variation>A</variation>
    <location>
        <position position="256"/>
    </location>
</feature>
<feature type="mutagenesis site" description="No effect on dimerization." evidence="3">
    <original>G</original>
    <variation>A</variation>
    <location>
        <position position="263"/>
    </location>
</feature>
<feature type="mutagenesis site" description="Loss of dinerization." evidence="3">
    <original>L</original>
    <variation>A</variation>
    <location>
        <position position="270"/>
    </location>
</feature>
<feature type="mutagenesis site" description="Loss of dinerization." evidence="3">
    <original>L</original>
    <variation>A</variation>
    <location>
        <position position="277"/>
    </location>
</feature>
<feature type="mutagenesis site" description="Loss of dinerization." evidence="3">
    <original>F</original>
    <variation>A</variation>
    <location>
        <position position="284"/>
    </location>
</feature>
<feature type="mutagenesis site" description="Loss of dinerization." evidence="3">
    <original>F</original>
    <variation>A</variation>
    <location>
        <position position="291"/>
    </location>
</feature>
<protein>
    <recommendedName>
        <fullName evidence="7">GLABROUS1 enhancer-binding protein</fullName>
    </recommendedName>
    <alternativeName>
        <fullName evidence="9">Probable transcription factor At4g00270</fullName>
    </alternativeName>
    <alternativeName>
        <fullName evidence="7">Protein GeBP</fullName>
    </alternativeName>
    <alternativeName>
        <fullName evidence="8">Protein STOREKEEPER RELATED 1</fullName>
    </alternativeName>
    <alternativeName>
        <fullName evidence="9">Storekeeper-like protein At4g00270</fullName>
    </alternativeName>
</protein>
<gene>
    <name evidence="7" type="primary">GEBP</name>
    <name evidence="8" type="synonym">STKR1</name>
    <name evidence="11" type="ordered locus">At4g00270</name>
    <name evidence="12" type="ORF">F5I10.11</name>
</gene>
<dbReference type="EMBL" id="AF013293">
    <property type="protein sequence ID" value="AAB62831.1"/>
    <property type="status" value="ALT_SEQ"/>
    <property type="molecule type" value="Genomic_DNA"/>
</dbReference>
<dbReference type="EMBL" id="AF195115">
    <property type="protein sequence ID" value="AAF02789.1"/>
    <property type="status" value="ALT_SEQ"/>
    <property type="molecule type" value="Genomic_DNA"/>
</dbReference>
<dbReference type="EMBL" id="AL161471">
    <property type="protein sequence ID" value="CAB80785.1"/>
    <property type="status" value="ALT_SEQ"/>
    <property type="molecule type" value="Genomic_DNA"/>
</dbReference>
<dbReference type="EMBL" id="CP002687">
    <property type="protein sequence ID" value="AEE81848.1"/>
    <property type="molecule type" value="Genomic_DNA"/>
</dbReference>
<dbReference type="EMBL" id="AF361590">
    <property type="protein sequence ID" value="AAK32758.1"/>
    <property type="molecule type" value="mRNA"/>
</dbReference>
<dbReference type="EMBL" id="AY074837">
    <property type="protein sequence ID" value="AAL69535.1"/>
    <property type="molecule type" value="mRNA"/>
</dbReference>
<dbReference type="PIR" id="T01544">
    <property type="entry name" value="T01544"/>
</dbReference>
<dbReference type="RefSeq" id="NP_567163.1">
    <property type="nucleotide sequence ID" value="NM_116248.4"/>
</dbReference>
<dbReference type="SMR" id="Q9ASZ1"/>
<dbReference type="FunCoup" id="Q9ASZ1">
    <property type="interactions" value="10"/>
</dbReference>
<dbReference type="IntAct" id="Q9ASZ1">
    <property type="interactions" value="23"/>
</dbReference>
<dbReference type="STRING" id="3702.Q9ASZ1"/>
<dbReference type="iPTMnet" id="Q9ASZ1"/>
<dbReference type="PaxDb" id="3702-AT4G00270.1"/>
<dbReference type="ProteomicsDB" id="228305"/>
<dbReference type="EnsemblPlants" id="AT4G00270.1">
    <property type="protein sequence ID" value="AT4G00270.1"/>
    <property type="gene ID" value="AT4G00270"/>
</dbReference>
<dbReference type="GeneID" id="827164"/>
<dbReference type="Gramene" id="AT4G00270.1">
    <property type="protein sequence ID" value="AT4G00270.1"/>
    <property type="gene ID" value="AT4G00270"/>
</dbReference>
<dbReference type="KEGG" id="ath:AT4G00270"/>
<dbReference type="Araport" id="AT4G00270"/>
<dbReference type="TAIR" id="AT4G00270">
    <property type="gene designation" value="GEBP"/>
</dbReference>
<dbReference type="eggNOG" id="ENOG502R1KX">
    <property type="taxonomic scope" value="Eukaryota"/>
</dbReference>
<dbReference type="HOGENOM" id="CLU_055192_0_0_1"/>
<dbReference type="InParanoid" id="Q9ASZ1"/>
<dbReference type="OMA" id="GECAFKE"/>
<dbReference type="PhylomeDB" id="Q9ASZ1"/>
<dbReference type="PRO" id="PR:Q9ASZ1"/>
<dbReference type="Proteomes" id="UP000006548">
    <property type="component" value="Chromosome 4"/>
</dbReference>
<dbReference type="ExpressionAtlas" id="Q9ASZ1">
    <property type="expression patterns" value="baseline and differential"/>
</dbReference>
<dbReference type="GO" id="GO:0005730">
    <property type="term" value="C:nucleolus"/>
    <property type="evidence" value="ECO:0000314"/>
    <property type="project" value="TAIR"/>
</dbReference>
<dbReference type="GO" id="GO:0000987">
    <property type="term" value="F:cis-regulatory region sequence-specific DNA binding"/>
    <property type="evidence" value="ECO:0000314"/>
    <property type="project" value="TAIR"/>
</dbReference>
<dbReference type="GO" id="GO:0003700">
    <property type="term" value="F:DNA-binding transcription factor activity"/>
    <property type="evidence" value="ECO:0000314"/>
    <property type="project" value="TAIR"/>
</dbReference>
<dbReference type="GO" id="GO:0019900">
    <property type="term" value="F:kinase binding"/>
    <property type="evidence" value="ECO:0000353"/>
    <property type="project" value="UniProtKB"/>
</dbReference>
<dbReference type="GO" id="GO:0000976">
    <property type="term" value="F:transcription cis-regulatory region binding"/>
    <property type="evidence" value="ECO:0000353"/>
    <property type="project" value="TAIR"/>
</dbReference>
<dbReference type="GO" id="GO:0002229">
    <property type="term" value="P:defense response to oomycetes"/>
    <property type="evidence" value="ECO:0000315"/>
    <property type="project" value="UniProtKB"/>
</dbReference>
<dbReference type="GO" id="GO:0006355">
    <property type="term" value="P:regulation of DNA-templated transcription"/>
    <property type="evidence" value="ECO:0000304"/>
    <property type="project" value="TAIR"/>
</dbReference>
<dbReference type="InterPro" id="IPR007592">
    <property type="entry name" value="GEBP"/>
</dbReference>
<dbReference type="InterPro" id="IPR053932">
    <property type="entry name" value="GeBP-like_DBD"/>
</dbReference>
<dbReference type="PANTHER" id="PTHR31662">
    <property type="entry name" value="BNAANNG10740D PROTEIN-RELATED"/>
    <property type="match status" value="1"/>
</dbReference>
<dbReference type="PANTHER" id="PTHR31662:SF49">
    <property type="entry name" value="GLABROUS1 ENHANCER-BINDING PROTEIN-RELATED"/>
    <property type="match status" value="1"/>
</dbReference>
<dbReference type="Pfam" id="PF04504">
    <property type="entry name" value="GeBP-like_DBD"/>
    <property type="match status" value="1"/>
</dbReference>
<proteinExistence type="evidence at protein level"/>
<keyword id="KW-0238">DNA-binding</keyword>
<keyword id="KW-0539">Nucleus</keyword>
<keyword id="KW-0597">Phosphoprotein</keyword>
<keyword id="KW-0611">Plant defense</keyword>
<keyword id="KW-1185">Reference proteome</keyword>
<keyword id="KW-0804">Transcription</keyword>
<keyword id="KW-0805">Transcription regulation</keyword>
<comment type="function">
    <text evidence="2 4 6 10">DNA-binding protein, which specifically recognizes the GL1 enhancer sequence (PubMed:12535344). May be involved in leaf initiation (PubMed:12535344). May play redundant roles with GPL1 and GPL2 in cytokinin responses by regulating the transcript levels of type-A ARR response genes (PubMed:18162594). Involved in stress responses (PubMed:21875893). Plays a repressive role in cell expansion by counteracting the positive role of CPR5 in this process, but does not regulate cell proliferation or endoreduplication (PubMed:21875893). May play a role in plant defense (PubMed:29192025).</text>
</comment>
<comment type="subunit">
    <text evidence="3 5 6">Homo- and heterodimers (PubMed:18162594, PubMed:29192025). Interacts with GPL1, GPL2 and GPL3 (PubMed:18162594). Interacts with KIN10, KIN11 and FLZ4 (PubMed:24600465). Interacts with KIN10 and KIN11 via its N-terminal part (PubMed:29192025). Interacts with GPL1 and GPL3 via its C-terminal part (PubMed:29192025).</text>
</comment>
<comment type="interaction">
    <interactant intactId="EBI-15191723">
        <id>Q9ASZ1</id>
    </interactant>
    <interactant intactId="EBI-15192745">
        <id>Q9LST3</id>
        <label>At5g60142</label>
    </interactant>
    <organismsDiffer>false</organismsDiffer>
    <experiments>3</experiments>
</comment>
<comment type="interaction">
    <interactant intactId="EBI-15191723">
        <id>Q9ASZ1</id>
    </interactant>
    <interactant intactId="EBI-15199331">
        <id>Q9SJM4</id>
        <label>GPL3</label>
    </interactant>
    <organismsDiffer>false</organismsDiffer>
    <experiments>3</experiments>
</comment>
<comment type="interaction">
    <interactant intactId="EBI-15191723">
        <id>Q9ASZ1</id>
    </interactant>
    <interactant intactId="EBI-15191543">
        <id>Q05153</id>
        <label>SSRP1</label>
    </interactant>
    <organismsDiffer>false</organismsDiffer>
    <experiments>3</experiments>
</comment>
<comment type="interaction">
    <interactant intactId="EBI-15191723">
        <id>Q9ASZ1</id>
    </interactant>
    <interactant intactId="EBI-1102271">
        <id>Q84JG2</id>
        <label>SWI3B</label>
    </interactant>
    <organismsDiffer>false</organismsDiffer>
    <experiments>3</experiments>
</comment>
<comment type="subcellular location">
    <subcellularLocation>
        <location evidence="2">Nucleus</location>
        <location evidence="2">Nucleolus</location>
    </subcellularLocation>
    <subcellularLocation>
        <location evidence="3">Nucleus</location>
    </subcellularLocation>
</comment>
<comment type="tissue specificity">
    <text evidence="2 3">Expressed in the apical meristem and young leaf primordia (PubMed:12535344, PubMed:18162594). Not detected in emerging or mature leaves (PubMed:12535344). Detected in the vascular tissues of cotyledons and leaves, in hydathodes and at the base of flowers and siliques, but not in roots (PubMed:18162594).</text>
</comment>
<comment type="induction">
    <text evidence="2">Up-regulated by KNAT1. Not regulated by gibberellins.</text>
</comment>
<comment type="disruption phenotype">
    <text evidence="2">No visible phenotype.</text>
</comment>
<comment type="miscellaneous">
    <text evidence="6">Overexpression of GEBP results in a reduced plant growth, a delay in flowering, a reduced anthocyanin accumulation, a delayed senescence and an enhanced resistance toward a virulent strain of the biotrophic oomycete pathogen H.arabidopsidis.</text>
</comment>
<comment type="similarity">
    <text evidence="9">Belongs to the GeBP family.</text>
</comment>
<comment type="sequence caution" evidence="9">
    <conflict type="erroneous gene model prediction">
        <sequence resource="EMBL-CDS" id="AAB62831"/>
    </conflict>
</comment>
<comment type="sequence caution" evidence="9">
    <conflict type="erroneous gene model prediction">
        <sequence resource="EMBL-CDS" id="AAF02789"/>
    </conflict>
</comment>
<comment type="sequence caution" evidence="9">
    <conflict type="erroneous gene model prediction">
        <sequence resource="EMBL-CDS" id="CAB80785"/>
    </conflict>
</comment>
<comment type="online information" name="Plant Transcription Factor Database">
    <link uri="https://planttfdb.gao-lab.org/family.php?fam=GeBP#family_intro"/>
</comment>
<organism>
    <name type="scientific">Arabidopsis thaliana</name>
    <name type="common">Mouse-ear cress</name>
    <dbReference type="NCBI Taxonomy" id="3702"/>
    <lineage>
        <taxon>Eukaryota</taxon>
        <taxon>Viridiplantae</taxon>
        <taxon>Streptophyta</taxon>
        <taxon>Embryophyta</taxon>
        <taxon>Tracheophyta</taxon>
        <taxon>Spermatophyta</taxon>
        <taxon>Magnoliopsida</taxon>
        <taxon>eudicotyledons</taxon>
        <taxon>Gunneridae</taxon>
        <taxon>Pentapetalae</taxon>
        <taxon>rosids</taxon>
        <taxon>malvids</taxon>
        <taxon>Brassicales</taxon>
        <taxon>Brassicaceae</taxon>
        <taxon>Camelineae</taxon>
        <taxon>Arabidopsis</taxon>
    </lineage>
</organism>
<accession>Q9ASZ1</accession>
<accession>O23075</accession>
<name>STKLO_ARATH</name>
<sequence>MVTPKQIDFSSCVGADNSNGTLSHRRSPRNIPSSKRAASVAEEETMKKKMKMKKKKKKLDPPLIVRIWNEEDELSILKGLVDYRAKTGFNPKIDWDAFCSFLGSSIVERFSKDQVLSKIRKLKRRFHVHSEKINQGNDPKFTRSSDSEAFGFSSMIWGQGDDDGMDKEHEVNGNGAAENRTNESGEEMLKEHEEEVANTELLNENGAAKTTENGTSSGKERHDEDNDDDDELCAVQDAFEAVMSQGLSGYQKKLQLEKLMNLGNGKRRELSDEWKALCVEETRFNIKKLRFSAKLAEAANDS</sequence>